<gene>
    <name evidence="1" type="primary">thiC</name>
    <name type="ordered locus">BB0304</name>
</gene>
<accession>Q7WQM6</accession>
<protein>
    <recommendedName>
        <fullName evidence="1">Phosphomethylpyrimidine synthase</fullName>
        <ecNumber evidence="1">4.1.99.17</ecNumber>
    </recommendedName>
    <alternativeName>
        <fullName evidence="1">Hydroxymethylpyrimidine phosphate synthase</fullName>
        <shortName evidence="1">HMP-P synthase</shortName>
        <shortName evidence="1">HMP-phosphate synthase</shortName>
        <shortName evidence="1">HMPP synthase</shortName>
    </alternativeName>
    <alternativeName>
        <fullName evidence="1">Thiamine biosynthesis protein ThiC</fullName>
    </alternativeName>
</protein>
<dbReference type="EC" id="4.1.99.17" evidence="1"/>
<dbReference type="EMBL" id="BX640437">
    <property type="protein sequence ID" value="CAE30802.1"/>
    <property type="molecule type" value="Genomic_DNA"/>
</dbReference>
<dbReference type="RefSeq" id="WP_003807441.1">
    <property type="nucleotide sequence ID" value="NC_002927.3"/>
</dbReference>
<dbReference type="SMR" id="Q7WQM6"/>
<dbReference type="GeneID" id="93206532"/>
<dbReference type="KEGG" id="bbr:BB0304"/>
<dbReference type="eggNOG" id="COG0422">
    <property type="taxonomic scope" value="Bacteria"/>
</dbReference>
<dbReference type="HOGENOM" id="CLU_013181_2_1_4"/>
<dbReference type="UniPathway" id="UPA00060"/>
<dbReference type="Proteomes" id="UP000001027">
    <property type="component" value="Chromosome"/>
</dbReference>
<dbReference type="GO" id="GO:0005829">
    <property type="term" value="C:cytosol"/>
    <property type="evidence" value="ECO:0007669"/>
    <property type="project" value="TreeGrafter"/>
</dbReference>
<dbReference type="GO" id="GO:0051539">
    <property type="term" value="F:4 iron, 4 sulfur cluster binding"/>
    <property type="evidence" value="ECO:0007669"/>
    <property type="project" value="UniProtKB-KW"/>
</dbReference>
<dbReference type="GO" id="GO:0016830">
    <property type="term" value="F:carbon-carbon lyase activity"/>
    <property type="evidence" value="ECO:0007669"/>
    <property type="project" value="InterPro"/>
</dbReference>
<dbReference type="GO" id="GO:0008270">
    <property type="term" value="F:zinc ion binding"/>
    <property type="evidence" value="ECO:0007669"/>
    <property type="project" value="UniProtKB-UniRule"/>
</dbReference>
<dbReference type="GO" id="GO:0009228">
    <property type="term" value="P:thiamine biosynthetic process"/>
    <property type="evidence" value="ECO:0007669"/>
    <property type="project" value="UniProtKB-KW"/>
</dbReference>
<dbReference type="GO" id="GO:0009229">
    <property type="term" value="P:thiamine diphosphate biosynthetic process"/>
    <property type="evidence" value="ECO:0007669"/>
    <property type="project" value="UniProtKB-UniRule"/>
</dbReference>
<dbReference type="FunFam" id="3.20.20.540:FF:000001">
    <property type="entry name" value="Phosphomethylpyrimidine synthase"/>
    <property type="match status" value="1"/>
</dbReference>
<dbReference type="Gene3D" id="6.10.250.620">
    <property type="match status" value="1"/>
</dbReference>
<dbReference type="Gene3D" id="3.20.20.540">
    <property type="entry name" value="Radical SAM ThiC family, central domain"/>
    <property type="match status" value="1"/>
</dbReference>
<dbReference type="HAMAP" id="MF_00089">
    <property type="entry name" value="ThiC"/>
    <property type="match status" value="1"/>
</dbReference>
<dbReference type="InterPro" id="IPR037509">
    <property type="entry name" value="ThiC"/>
</dbReference>
<dbReference type="InterPro" id="IPR025747">
    <property type="entry name" value="ThiC-associated_dom"/>
</dbReference>
<dbReference type="InterPro" id="IPR038521">
    <property type="entry name" value="ThiC/Bza_core_dom"/>
</dbReference>
<dbReference type="InterPro" id="IPR002817">
    <property type="entry name" value="ThiC/BzaA/B"/>
</dbReference>
<dbReference type="NCBIfam" id="NF006763">
    <property type="entry name" value="PRK09284.1"/>
    <property type="match status" value="1"/>
</dbReference>
<dbReference type="NCBIfam" id="NF009895">
    <property type="entry name" value="PRK13352.1"/>
    <property type="match status" value="1"/>
</dbReference>
<dbReference type="NCBIfam" id="TIGR00190">
    <property type="entry name" value="thiC"/>
    <property type="match status" value="1"/>
</dbReference>
<dbReference type="PANTHER" id="PTHR30557:SF1">
    <property type="entry name" value="PHOSPHOMETHYLPYRIMIDINE SYNTHASE, CHLOROPLASTIC"/>
    <property type="match status" value="1"/>
</dbReference>
<dbReference type="PANTHER" id="PTHR30557">
    <property type="entry name" value="THIAMINE BIOSYNTHESIS PROTEIN THIC"/>
    <property type="match status" value="1"/>
</dbReference>
<dbReference type="Pfam" id="PF13667">
    <property type="entry name" value="ThiC-associated"/>
    <property type="match status" value="1"/>
</dbReference>
<dbReference type="Pfam" id="PF01964">
    <property type="entry name" value="ThiC_Rad_SAM"/>
    <property type="match status" value="1"/>
</dbReference>
<dbReference type="SFLD" id="SFLDF00407">
    <property type="entry name" value="phosphomethylpyrimidine_syntha"/>
    <property type="match status" value="1"/>
</dbReference>
<dbReference type="SFLD" id="SFLDG01114">
    <property type="entry name" value="phosphomethylpyrimidine_syntha"/>
    <property type="match status" value="1"/>
</dbReference>
<dbReference type="SFLD" id="SFLDS00113">
    <property type="entry name" value="Radical_SAM_Phosphomethylpyrim"/>
    <property type="match status" value="1"/>
</dbReference>
<comment type="function">
    <text evidence="1">Catalyzes the synthesis of the hydroxymethylpyrimidine phosphate (HMP-P) moiety of thiamine from aminoimidazole ribotide (AIR) in a radical S-adenosyl-L-methionine (SAM)-dependent reaction.</text>
</comment>
<comment type="catalytic activity">
    <reaction evidence="1">
        <text>5-amino-1-(5-phospho-beta-D-ribosyl)imidazole + S-adenosyl-L-methionine = 4-amino-2-methyl-5-(phosphooxymethyl)pyrimidine + CO + 5'-deoxyadenosine + formate + L-methionine + 3 H(+)</text>
        <dbReference type="Rhea" id="RHEA:24840"/>
        <dbReference type="ChEBI" id="CHEBI:15378"/>
        <dbReference type="ChEBI" id="CHEBI:15740"/>
        <dbReference type="ChEBI" id="CHEBI:17245"/>
        <dbReference type="ChEBI" id="CHEBI:17319"/>
        <dbReference type="ChEBI" id="CHEBI:57844"/>
        <dbReference type="ChEBI" id="CHEBI:58354"/>
        <dbReference type="ChEBI" id="CHEBI:59789"/>
        <dbReference type="ChEBI" id="CHEBI:137981"/>
        <dbReference type="EC" id="4.1.99.17"/>
    </reaction>
</comment>
<comment type="cofactor">
    <cofactor evidence="1">
        <name>[4Fe-4S] cluster</name>
        <dbReference type="ChEBI" id="CHEBI:49883"/>
    </cofactor>
    <text evidence="1">Binds 1 [4Fe-4S] cluster per subunit. The cluster is coordinated with 3 cysteines and an exchangeable S-adenosyl-L-methionine.</text>
</comment>
<comment type="pathway">
    <text evidence="1">Cofactor biosynthesis; thiamine diphosphate biosynthesis.</text>
</comment>
<comment type="subunit">
    <text evidence="1">Homodimer.</text>
</comment>
<comment type="similarity">
    <text evidence="1">Belongs to the ThiC family.</text>
</comment>
<name>THIC_BORBR</name>
<evidence type="ECO:0000255" key="1">
    <source>
        <dbReference type="HAMAP-Rule" id="MF_00089"/>
    </source>
</evidence>
<organism>
    <name type="scientific">Bordetella bronchiseptica (strain ATCC BAA-588 / NCTC 13252 / RB50)</name>
    <name type="common">Alcaligenes bronchisepticus</name>
    <dbReference type="NCBI Taxonomy" id="257310"/>
    <lineage>
        <taxon>Bacteria</taxon>
        <taxon>Pseudomonadati</taxon>
        <taxon>Pseudomonadota</taxon>
        <taxon>Betaproteobacteria</taxon>
        <taxon>Burkholderiales</taxon>
        <taxon>Alcaligenaceae</taxon>
        <taxon>Bordetella</taxon>
    </lineage>
</organism>
<proteinExistence type="inferred from homology"/>
<keyword id="KW-0004">4Fe-4S</keyword>
<keyword id="KW-0408">Iron</keyword>
<keyword id="KW-0411">Iron-sulfur</keyword>
<keyword id="KW-0456">Lyase</keyword>
<keyword id="KW-0479">Metal-binding</keyword>
<keyword id="KW-0949">S-adenosyl-L-methionine</keyword>
<keyword id="KW-0784">Thiamine biosynthesis</keyword>
<keyword id="KW-0862">Zinc</keyword>
<sequence length="637" mass="70996">MNANPKFLAATAEVDAAAVAPLPKSRKVYETGSRPDIRVPFREIEQADTPTMFGGEKNPPLTVYDTSGPYTDPQASIDIRRGLPALRRAWIEERGDTEVLDGPTSDYGKERLTDPKLTAMRFDLQRPPRRARAGANVTQMHYARRGIVTPEMEFIALRENLRREHYLETLRASGPDGEKLAKRLLRQHPGQSFGAALPSAITPEFVREEVARGRAIIPANINHPEIEPMIIGRNFLVKINANIGNSAVSSGIGEEVEKMTWAIRWGGDTVMDLSTGKHIHETREWIIRNSPVPIGTVPIYQALEKVDGKAEELTWEIFRDTLIEQAEQGVDYFTIHAGVRLPFIPMTADRMTGIVSRGGSIMAKWCLAHHKESFLYERFEEICEIMKAYDVSFSLGDGLRPGSGYDANDEAQFAELKTLGELTQVAWKHDVQVMIEGPGHVPMQMIKENMELQLKHCDEAPFYTLGPLTTDIAPGYDHITSGIGAALIGWYGTAMLCYVTPKEHLGLPNKKDVKDGIITYKIAAHAADLAKGHPGAAIRDNALSKARFEFRWDDQFNLGLDPDTAKEFHDETLPKDSMKVAHFCSMCGPHFCSMKITQDVRDYAAAQGVSEKDALQQGMQEKAVEFVKKGAEVYHRT</sequence>
<feature type="chain" id="PRO_0000152787" description="Phosphomethylpyrimidine synthase">
    <location>
        <begin position="1"/>
        <end position="637"/>
    </location>
</feature>
<feature type="binding site" evidence="1">
    <location>
        <position position="242"/>
    </location>
    <ligand>
        <name>substrate</name>
    </ligand>
</feature>
<feature type="binding site" evidence="1">
    <location>
        <position position="271"/>
    </location>
    <ligand>
        <name>substrate</name>
    </ligand>
</feature>
<feature type="binding site" evidence="1">
    <location>
        <position position="300"/>
    </location>
    <ligand>
        <name>substrate</name>
    </ligand>
</feature>
<feature type="binding site" evidence="1">
    <location>
        <position position="336"/>
    </location>
    <ligand>
        <name>substrate</name>
    </ligand>
</feature>
<feature type="binding site" evidence="1">
    <location>
        <begin position="356"/>
        <end position="358"/>
    </location>
    <ligand>
        <name>substrate</name>
    </ligand>
</feature>
<feature type="binding site" evidence="1">
    <location>
        <begin position="397"/>
        <end position="400"/>
    </location>
    <ligand>
        <name>substrate</name>
    </ligand>
</feature>
<feature type="binding site" evidence="1">
    <location>
        <position position="436"/>
    </location>
    <ligand>
        <name>substrate</name>
    </ligand>
</feature>
<feature type="binding site" evidence="1">
    <location>
        <position position="440"/>
    </location>
    <ligand>
        <name>Zn(2+)</name>
        <dbReference type="ChEBI" id="CHEBI:29105"/>
    </ligand>
</feature>
<feature type="binding site" evidence="1">
    <location>
        <position position="463"/>
    </location>
    <ligand>
        <name>substrate</name>
    </ligand>
</feature>
<feature type="binding site" evidence="1">
    <location>
        <position position="504"/>
    </location>
    <ligand>
        <name>Zn(2+)</name>
        <dbReference type="ChEBI" id="CHEBI:29105"/>
    </ligand>
</feature>
<feature type="binding site" evidence="1">
    <location>
        <position position="584"/>
    </location>
    <ligand>
        <name>[4Fe-4S] cluster</name>
        <dbReference type="ChEBI" id="CHEBI:49883"/>
        <note>4Fe-4S-S-AdoMet</note>
    </ligand>
</feature>
<feature type="binding site" evidence="1">
    <location>
        <position position="587"/>
    </location>
    <ligand>
        <name>[4Fe-4S] cluster</name>
        <dbReference type="ChEBI" id="CHEBI:49883"/>
        <note>4Fe-4S-S-AdoMet</note>
    </ligand>
</feature>
<feature type="binding site" evidence="1">
    <location>
        <position position="592"/>
    </location>
    <ligand>
        <name>[4Fe-4S] cluster</name>
        <dbReference type="ChEBI" id="CHEBI:49883"/>
        <note>4Fe-4S-S-AdoMet</note>
    </ligand>
</feature>
<reference key="1">
    <citation type="journal article" date="2003" name="Nat. Genet.">
        <title>Comparative analysis of the genome sequences of Bordetella pertussis, Bordetella parapertussis and Bordetella bronchiseptica.</title>
        <authorList>
            <person name="Parkhill J."/>
            <person name="Sebaihia M."/>
            <person name="Preston A."/>
            <person name="Murphy L.D."/>
            <person name="Thomson N.R."/>
            <person name="Harris D.E."/>
            <person name="Holden M.T.G."/>
            <person name="Churcher C.M."/>
            <person name="Bentley S.D."/>
            <person name="Mungall K.L."/>
            <person name="Cerdeno-Tarraga A.-M."/>
            <person name="Temple L."/>
            <person name="James K.D."/>
            <person name="Harris B."/>
            <person name="Quail M.A."/>
            <person name="Achtman M."/>
            <person name="Atkin R."/>
            <person name="Baker S."/>
            <person name="Basham D."/>
            <person name="Bason N."/>
            <person name="Cherevach I."/>
            <person name="Chillingworth T."/>
            <person name="Collins M."/>
            <person name="Cronin A."/>
            <person name="Davis P."/>
            <person name="Doggett J."/>
            <person name="Feltwell T."/>
            <person name="Goble A."/>
            <person name="Hamlin N."/>
            <person name="Hauser H."/>
            <person name="Holroyd S."/>
            <person name="Jagels K."/>
            <person name="Leather S."/>
            <person name="Moule S."/>
            <person name="Norberczak H."/>
            <person name="O'Neil S."/>
            <person name="Ormond D."/>
            <person name="Price C."/>
            <person name="Rabbinowitsch E."/>
            <person name="Rutter S."/>
            <person name="Sanders M."/>
            <person name="Saunders D."/>
            <person name="Seeger K."/>
            <person name="Sharp S."/>
            <person name="Simmonds M."/>
            <person name="Skelton J."/>
            <person name="Squares R."/>
            <person name="Squares S."/>
            <person name="Stevens K."/>
            <person name="Unwin L."/>
            <person name="Whitehead S."/>
            <person name="Barrell B.G."/>
            <person name="Maskell D.J."/>
        </authorList>
    </citation>
    <scope>NUCLEOTIDE SEQUENCE [LARGE SCALE GENOMIC DNA]</scope>
    <source>
        <strain>ATCC BAA-588 / NCTC 13252 / RB50</strain>
    </source>
</reference>